<proteinExistence type="inferred from homology"/>
<gene>
    <name type="primary">ycf19</name>
</gene>
<feature type="chain" id="PRO_0000217321" description="Uncharacterized protein ycf19">
    <location>
        <begin position="1"/>
        <end position="91"/>
    </location>
</feature>
<dbReference type="EMBL" id="AF041468">
    <property type="protein sequence ID" value="AAC35609.1"/>
    <property type="molecule type" value="Genomic_DNA"/>
</dbReference>
<dbReference type="RefSeq" id="NP_050675.1">
    <property type="nucleotide sequence ID" value="NC_000926.1"/>
</dbReference>
<dbReference type="SMR" id="O78424"/>
<dbReference type="GeneID" id="856961"/>
<dbReference type="HOGENOM" id="CLU_136788_4_0_1"/>
<dbReference type="OMA" id="TFMIITR"/>
<dbReference type="GO" id="GO:0009507">
    <property type="term" value="C:chloroplast"/>
    <property type="evidence" value="ECO:0007669"/>
    <property type="project" value="UniProtKB-SubCell"/>
</dbReference>
<dbReference type="GO" id="GO:0016020">
    <property type="term" value="C:membrane"/>
    <property type="evidence" value="ECO:0007669"/>
    <property type="project" value="InterPro"/>
</dbReference>
<dbReference type="GO" id="GO:0010020">
    <property type="term" value="P:chloroplast fission"/>
    <property type="evidence" value="ECO:0007669"/>
    <property type="project" value="TreeGrafter"/>
</dbReference>
<dbReference type="GO" id="GO:0090143">
    <property type="term" value="P:nucleoid organization"/>
    <property type="evidence" value="ECO:0007669"/>
    <property type="project" value="TreeGrafter"/>
</dbReference>
<dbReference type="InterPro" id="IPR003425">
    <property type="entry name" value="CCB3/YggT"/>
</dbReference>
<dbReference type="PANTHER" id="PTHR33219:SF14">
    <property type="entry name" value="PROTEIN COFACTOR ASSEMBLY OF COMPLEX C SUBUNIT B CCB3, CHLOROPLASTIC-RELATED"/>
    <property type="match status" value="1"/>
</dbReference>
<dbReference type="PANTHER" id="PTHR33219">
    <property type="entry name" value="YLMG HOMOLOG PROTEIN 2, CHLOROPLASTIC"/>
    <property type="match status" value="1"/>
</dbReference>
<dbReference type="Pfam" id="PF02325">
    <property type="entry name" value="YGGT"/>
    <property type="match status" value="1"/>
</dbReference>
<protein>
    <recommendedName>
        <fullName>Uncharacterized protein ycf19</fullName>
    </recommendedName>
</protein>
<geneLocation type="chloroplast"/>
<sequence length="91" mass="10377">MSNSFTLLFSSFIGFLQIYLILLLIRVSLTWFPNVNWYGQPFYSLSRITDPYLKMFRGIVPPLIGIDISPILGFILLQCIMQIVSNIGLSS</sequence>
<comment type="subcellular location">
    <subcellularLocation>
        <location>Plastid</location>
        <location>Chloroplast</location>
    </subcellularLocation>
</comment>
<comment type="similarity">
    <text evidence="1">Belongs to the ycf19 family.</text>
</comment>
<evidence type="ECO:0000305" key="1"/>
<accession>O78424</accession>
<reference key="1">
    <citation type="journal article" date="1999" name="J. Mol. Evol.">
        <title>The plastid genome of the cryptophyte alga, Guillardia theta: complete sequence and conserved synteny groups confirm its common ancestry with red algae.</title>
        <authorList>
            <person name="Douglas S.E."/>
            <person name="Penny S.L."/>
        </authorList>
    </citation>
    <scope>NUCLEOTIDE SEQUENCE [LARGE SCALE GENOMIC DNA]</scope>
</reference>
<keyword id="KW-0150">Chloroplast</keyword>
<keyword id="KW-0934">Plastid</keyword>
<name>YCF19_GUITH</name>
<organism>
    <name type="scientific">Guillardia theta</name>
    <name type="common">Cryptophyte</name>
    <name type="synonym">Cryptomonas phi</name>
    <dbReference type="NCBI Taxonomy" id="55529"/>
    <lineage>
        <taxon>Eukaryota</taxon>
        <taxon>Cryptophyceae</taxon>
        <taxon>Pyrenomonadales</taxon>
        <taxon>Geminigeraceae</taxon>
        <taxon>Guillardia</taxon>
    </lineage>
</organism>